<gene>
    <name evidence="1" type="primary">atpA</name>
    <name type="ordered locus">BUAP5A_006</name>
</gene>
<accession>B8D8H1</accession>
<proteinExistence type="inferred from homology"/>
<name>ATPA_BUCA5</name>
<feature type="chain" id="PRO_1000166525" description="ATP synthase subunit alpha">
    <location>
        <begin position="1"/>
        <end position="512"/>
    </location>
</feature>
<feature type="binding site" evidence="1">
    <location>
        <begin position="169"/>
        <end position="176"/>
    </location>
    <ligand>
        <name>ATP</name>
        <dbReference type="ChEBI" id="CHEBI:30616"/>
    </ligand>
</feature>
<feature type="site" description="Required for activity" evidence="1">
    <location>
        <position position="373"/>
    </location>
</feature>
<protein>
    <recommendedName>
        <fullName evidence="1">ATP synthase subunit alpha</fullName>
        <ecNumber evidence="1">7.1.2.2</ecNumber>
    </recommendedName>
    <alternativeName>
        <fullName evidence="1">ATP synthase F1 sector subunit alpha</fullName>
    </alternativeName>
    <alternativeName>
        <fullName evidence="1">F-ATPase subunit alpha</fullName>
    </alternativeName>
</protein>
<sequence>MRLNSTEISKLIKERIAQFEVFNQSYNEGSIISVSDGIIKINGLSNVMLGEMILLPNNEYAIALNIERDTVGAVVMGPYIHISEGAKVRCTGKILEVPVGDNFLGRVVNALGFPIDGKDSIQNDGFFPVEADAPGVIDRKSVNQPIQTGYKVIDSMIPIGRGQRELIIGDRQTGKTALAIDTIINQKQSGIKCIYVAIGQKLSTIINVVKKLEENNALFNTIIVVASASEAASLQYLAPYSGCAMAEFFRNKGEDSLIIYDDLSKHAVAYRQISLLLRRPPGREAFPGDIFYLHSRLLERASRVSMEYVQKITKNKITGKTGSITALPIIETQSGDVSAFVPTNVISITDGQIFLESNLFNSGIRPAVNPGISVSRVGSAAQTTIIKKLSSGIRTALAQYQELAAFSQFSSDLDDTTRKQLNHGQKITELLKQKQYSPISIAEQALILFVAENNFLDDISIDKITKFEKEILIYAHNYYFDLMEEINKTGDFNIVIKDKFIKLITEFKKNQF</sequence>
<reference key="1">
    <citation type="journal article" date="2009" name="Science">
        <title>The dynamics and time scale of ongoing genomic erosion in symbiotic bacteria.</title>
        <authorList>
            <person name="Moran N.A."/>
            <person name="McLaughlin H.J."/>
            <person name="Sorek R."/>
        </authorList>
    </citation>
    <scope>NUCLEOTIDE SEQUENCE [LARGE SCALE GENOMIC DNA]</scope>
    <source>
        <strain>5A</strain>
    </source>
</reference>
<dbReference type="EC" id="7.1.2.2" evidence="1"/>
<dbReference type="EMBL" id="CP001161">
    <property type="protein sequence ID" value="ACL30393.1"/>
    <property type="molecule type" value="Genomic_DNA"/>
</dbReference>
<dbReference type="RefSeq" id="WP_009873968.1">
    <property type="nucleotide sequence ID" value="NC_011833.1"/>
</dbReference>
<dbReference type="SMR" id="B8D8H1"/>
<dbReference type="KEGG" id="bap:BUAP5A_006"/>
<dbReference type="HOGENOM" id="CLU_010091_2_1_6"/>
<dbReference type="OrthoDB" id="9803053at2"/>
<dbReference type="Proteomes" id="UP000006904">
    <property type="component" value="Chromosome"/>
</dbReference>
<dbReference type="GO" id="GO:0005886">
    <property type="term" value="C:plasma membrane"/>
    <property type="evidence" value="ECO:0007669"/>
    <property type="project" value="UniProtKB-SubCell"/>
</dbReference>
<dbReference type="GO" id="GO:0045259">
    <property type="term" value="C:proton-transporting ATP synthase complex"/>
    <property type="evidence" value="ECO:0007669"/>
    <property type="project" value="UniProtKB-KW"/>
</dbReference>
<dbReference type="GO" id="GO:0043531">
    <property type="term" value="F:ADP binding"/>
    <property type="evidence" value="ECO:0007669"/>
    <property type="project" value="TreeGrafter"/>
</dbReference>
<dbReference type="GO" id="GO:0005524">
    <property type="term" value="F:ATP binding"/>
    <property type="evidence" value="ECO:0007669"/>
    <property type="project" value="UniProtKB-UniRule"/>
</dbReference>
<dbReference type="GO" id="GO:0046933">
    <property type="term" value="F:proton-transporting ATP synthase activity, rotational mechanism"/>
    <property type="evidence" value="ECO:0007669"/>
    <property type="project" value="UniProtKB-UniRule"/>
</dbReference>
<dbReference type="CDD" id="cd18113">
    <property type="entry name" value="ATP-synt_F1_alpha_C"/>
    <property type="match status" value="1"/>
</dbReference>
<dbReference type="CDD" id="cd18116">
    <property type="entry name" value="ATP-synt_F1_alpha_N"/>
    <property type="match status" value="1"/>
</dbReference>
<dbReference type="CDD" id="cd01132">
    <property type="entry name" value="F1-ATPase_alpha_CD"/>
    <property type="match status" value="1"/>
</dbReference>
<dbReference type="FunFam" id="1.20.150.20:FF:000001">
    <property type="entry name" value="ATP synthase subunit alpha"/>
    <property type="match status" value="1"/>
</dbReference>
<dbReference type="FunFam" id="2.40.30.20:FF:000001">
    <property type="entry name" value="ATP synthase subunit alpha"/>
    <property type="match status" value="1"/>
</dbReference>
<dbReference type="FunFam" id="3.40.50.300:FF:000002">
    <property type="entry name" value="ATP synthase subunit alpha"/>
    <property type="match status" value="1"/>
</dbReference>
<dbReference type="Gene3D" id="2.40.30.20">
    <property type="match status" value="1"/>
</dbReference>
<dbReference type="Gene3D" id="1.20.150.20">
    <property type="entry name" value="ATP synthase alpha/beta chain, C-terminal domain"/>
    <property type="match status" value="1"/>
</dbReference>
<dbReference type="Gene3D" id="3.40.50.300">
    <property type="entry name" value="P-loop containing nucleotide triphosphate hydrolases"/>
    <property type="match status" value="1"/>
</dbReference>
<dbReference type="HAMAP" id="MF_01346">
    <property type="entry name" value="ATP_synth_alpha_bact"/>
    <property type="match status" value="1"/>
</dbReference>
<dbReference type="InterPro" id="IPR023366">
    <property type="entry name" value="ATP_synth_asu-like_sf"/>
</dbReference>
<dbReference type="InterPro" id="IPR000793">
    <property type="entry name" value="ATP_synth_asu_C"/>
</dbReference>
<dbReference type="InterPro" id="IPR038376">
    <property type="entry name" value="ATP_synth_asu_C_sf"/>
</dbReference>
<dbReference type="InterPro" id="IPR033732">
    <property type="entry name" value="ATP_synth_F1_a_nt-bd_dom"/>
</dbReference>
<dbReference type="InterPro" id="IPR005294">
    <property type="entry name" value="ATP_synth_F1_asu"/>
</dbReference>
<dbReference type="InterPro" id="IPR020003">
    <property type="entry name" value="ATPase_a/bsu_AS"/>
</dbReference>
<dbReference type="InterPro" id="IPR004100">
    <property type="entry name" value="ATPase_F1/V1/A1_a/bsu_N"/>
</dbReference>
<dbReference type="InterPro" id="IPR036121">
    <property type="entry name" value="ATPase_F1/V1/A1_a/bsu_N_sf"/>
</dbReference>
<dbReference type="InterPro" id="IPR000194">
    <property type="entry name" value="ATPase_F1/V1/A1_a/bsu_nucl-bd"/>
</dbReference>
<dbReference type="InterPro" id="IPR027417">
    <property type="entry name" value="P-loop_NTPase"/>
</dbReference>
<dbReference type="NCBIfam" id="TIGR00962">
    <property type="entry name" value="atpA"/>
    <property type="match status" value="1"/>
</dbReference>
<dbReference type="NCBIfam" id="NF009884">
    <property type="entry name" value="PRK13343.1"/>
    <property type="match status" value="1"/>
</dbReference>
<dbReference type="PANTHER" id="PTHR48082">
    <property type="entry name" value="ATP SYNTHASE SUBUNIT ALPHA, MITOCHONDRIAL"/>
    <property type="match status" value="1"/>
</dbReference>
<dbReference type="PANTHER" id="PTHR48082:SF2">
    <property type="entry name" value="ATP SYNTHASE SUBUNIT ALPHA, MITOCHONDRIAL"/>
    <property type="match status" value="1"/>
</dbReference>
<dbReference type="Pfam" id="PF00006">
    <property type="entry name" value="ATP-synt_ab"/>
    <property type="match status" value="1"/>
</dbReference>
<dbReference type="Pfam" id="PF00306">
    <property type="entry name" value="ATP-synt_ab_C"/>
    <property type="match status" value="1"/>
</dbReference>
<dbReference type="Pfam" id="PF02874">
    <property type="entry name" value="ATP-synt_ab_N"/>
    <property type="match status" value="1"/>
</dbReference>
<dbReference type="SUPFAM" id="SSF47917">
    <property type="entry name" value="C-terminal domain of alpha and beta subunits of F1 ATP synthase"/>
    <property type="match status" value="1"/>
</dbReference>
<dbReference type="SUPFAM" id="SSF50615">
    <property type="entry name" value="N-terminal domain of alpha and beta subunits of F1 ATP synthase"/>
    <property type="match status" value="1"/>
</dbReference>
<dbReference type="SUPFAM" id="SSF52540">
    <property type="entry name" value="P-loop containing nucleoside triphosphate hydrolases"/>
    <property type="match status" value="1"/>
</dbReference>
<dbReference type="PROSITE" id="PS00152">
    <property type="entry name" value="ATPASE_ALPHA_BETA"/>
    <property type="match status" value="1"/>
</dbReference>
<organism>
    <name type="scientific">Buchnera aphidicola subsp. Acyrthosiphon pisum (strain 5A)</name>
    <dbReference type="NCBI Taxonomy" id="563178"/>
    <lineage>
        <taxon>Bacteria</taxon>
        <taxon>Pseudomonadati</taxon>
        <taxon>Pseudomonadota</taxon>
        <taxon>Gammaproteobacteria</taxon>
        <taxon>Enterobacterales</taxon>
        <taxon>Erwiniaceae</taxon>
        <taxon>Buchnera</taxon>
    </lineage>
</organism>
<evidence type="ECO:0000255" key="1">
    <source>
        <dbReference type="HAMAP-Rule" id="MF_01346"/>
    </source>
</evidence>
<keyword id="KW-0066">ATP synthesis</keyword>
<keyword id="KW-0067">ATP-binding</keyword>
<keyword id="KW-1003">Cell membrane</keyword>
<keyword id="KW-0139">CF(1)</keyword>
<keyword id="KW-0375">Hydrogen ion transport</keyword>
<keyword id="KW-0406">Ion transport</keyword>
<keyword id="KW-0472">Membrane</keyword>
<keyword id="KW-0547">Nucleotide-binding</keyword>
<keyword id="KW-1278">Translocase</keyword>
<keyword id="KW-0813">Transport</keyword>
<comment type="function">
    <text evidence="1">Produces ATP from ADP in the presence of a proton gradient across the membrane. The alpha chain is a regulatory subunit.</text>
</comment>
<comment type="catalytic activity">
    <reaction evidence="1">
        <text>ATP + H2O + 4 H(+)(in) = ADP + phosphate + 5 H(+)(out)</text>
        <dbReference type="Rhea" id="RHEA:57720"/>
        <dbReference type="ChEBI" id="CHEBI:15377"/>
        <dbReference type="ChEBI" id="CHEBI:15378"/>
        <dbReference type="ChEBI" id="CHEBI:30616"/>
        <dbReference type="ChEBI" id="CHEBI:43474"/>
        <dbReference type="ChEBI" id="CHEBI:456216"/>
        <dbReference type="EC" id="7.1.2.2"/>
    </reaction>
</comment>
<comment type="subunit">
    <text evidence="1">F-type ATPases have 2 components, CF(1) - the catalytic core - and CF(0) - the membrane proton channel. CF(1) has five subunits: alpha(3), beta(3), gamma(1), delta(1), epsilon(1). CF(0) has three main subunits: a(1), b(2) and c(9-12). The alpha and beta chains form an alternating ring which encloses part of the gamma chain. CF(1) is attached to CF(0) by a central stalk formed by the gamma and epsilon chains, while a peripheral stalk is formed by the delta and b chains.</text>
</comment>
<comment type="subcellular location">
    <subcellularLocation>
        <location evidence="1">Cell membrane</location>
        <topology evidence="1">Peripheral membrane protein</topology>
    </subcellularLocation>
</comment>
<comment type="similarity">
    <text evidence="1">Belongs to the ATPase alpha/beta chains family.</text>
</comment>